<sequence length="447" mass="49865">MNNIIPTEETHPLTWRLRNDRETVWIEEYCKKNGYFSLKKALKTMCPEDVVHLIKESGLKGRGGAGFSTGLKWSLMSKDNSSKIRYLLCNADEMEPGTYKDRFLMENIPHQLIEGMLLSAFALNVSRGYIFLRGEYIKAEYILKKSIQEAINFGFIGSNILNSGFNFELFLHTGAGRYICGEETALINSLEGRRANPRAKPPFPAVFGLWGKPTCVNNVETLSNVPSIVLHGVNWYKKLSKSTDTTGTKLMGFSGKVNNPGVWELPFGTTAREILEDYARGMKSGLFLKSWQPGGAGTDFLIEKHLDLPMDFTSIAKAGSRLGTAIAMAVDNKTNMISLVCNIEKFFSRESCGLCTPCREGLPWIVKILESLEKKEGHKNDVKNLERLCLDLSPGKTFCAHAPGAVEPLQSAIKYFRLEFEAGISIKKLKKCSNILGIQSNEFTSKV</sequence>
<gene>
    <name type="primary">nuoF</name>
    <name type="ordered locus">BUsg_151</name>
</gene>
<evidence type="ECO:0000250" key="1"/>
<evidence type="ECO:0000255" key="2"/>
<evidence type="ECO:0000305" key="3"/>
<proteinExistence type="inferred from homology"/>
<protein>
    <recommendedName>
        <fullName>NADH-quinone oxidoreductase subunit F</fullName>
        <ecNumber>7.1.1.-</ecNumber>
    </recommendedName>
    <alternativeName>
        <fullName>NADH dehydrogenase I subunit F</fullName>
    </alternativeName>
    <alternativeName>
        <fullName>NDH-1 subunit F</fullName>
    </alternativeName>
</protein>
<organism>
    <name type="scientific">Buchnera aphidicola subsp. Schizaphis graminum (strain Sg)</name>
    <dbReference type="NCBI Taxonomy" id="198804"/>
    <lineage>
        <taxon>Bacteria</taxon>
        <taxon>Pseudomonadati</taxon>
        <taxon>Pseudomonadota</taxon>
        <taxon>Gammaproteobacteria</taxon>
        <taxon>Enterobacterales</taxon>
        <taxon>Erwiniaceae</taxon>
        <taxon>Buchnera</taxon>
    </lineage>
</organism>
<keyword id="KW-0004">4Fe-4S</keyword>
<keyword id="KW-0285">Flavoprotein</keyword>
<keyword id="KW-0288">FMN</keyword>
<keyword id="KW-0408">Iron</keyword>
<keyword id="KW-0411">Iron-sulfur</keyword>
<keyword id="KW-0479">Metal-binding</keyword>
<keyword id="KW-0520">NAD</keyword>
<keyword id="KW-0874">Quinone</keyword>
<keyword id="KW-1278">Translocase</keyword>
<name>NUOF_BUCAP</name>
<dbReference type="EC" id="7.1.1.-"/>
<dbReference type="EMBL" id="AE013218">
    <property type="protein sequence ID" value="AAM67719.1"/>
    <property type="molecule type" value="Genomic_DNA"/>
</dbReference>
<dbReference type="RefSeq" id="WP_011053686.1">
    <property type="nucleotide sequence ID" value="NC_004061.1"/>
</dbReference>
<dbReference type="SMR" id="Q8K9Y3"/>
<dbReference type="STRING" id="198804.BUsg_151"/>
<dbReference type="GeneID" id="93003621"/>
<dbReference type="KEGG" id="bas:BUsg_151"/>
<dbReference type="eggNOG" id="COG1894">
    <property type="taxonomic scope" value="Bacteria"/>
</dbReference>
<dbReference type="HOGENOM" id="CLU_014881_0_1_6"/>
<dbReference type="Proteomes" id="UP000000416">
    <property type="component" value="Chromosome"/>
</dbReference>
<dbReference type="GO" id="GO:0051539">
    <property type="term" value="F:4 iron, 4 sulfur cluster binding"/>
    <property type="evidence" value="ECO:0007669"/>
    <property type="project" value="UniProtKB-KW"/>
</dbReference>
<dbReference type="GO" id="GO:0010181">
    <property type="term" value="F:FMN binding"/>
    <property type="evidence" value="ECO:0007669"/>
    <property type="project" value="InterPro"/>
</dbReference>
<dbReference type="GO" id="GO:0046872">
    <property type="term" value="F:metal ion binding"/>
    <property type="evidence" value="ECO:0007669"/>
    <property type="project" value="UniProtKB-KW"/>
</dbReference>
<dbReference type="GO" id="GO:0051287">
    <property type="term" value="F:NAD binding"/>
    <property type="evidence" value="ECO:0007669"/>
    <property type="project" value="InterPro"/>
</dbReference>
<dbReference type="GO" id="GO:0008137">
    <property type="term" value="F:NADH dehydrogenase (ubiquinone) activity"/>
    <property type="evidence" value="ECO:0007669"/>
    <property type="project" value="InterPro"/>
</dbReference>
<dbReference type="GO" id="GO:0048038">
    <property type="term" value="F:quinone binding"/>
    <property type="evidence" value="ECO:0007669"/>
    <property type="project" value="UniProtKB-KW"/>
</dbReference>
<dbReference type="FunFam" id="3.40.50.11540:FF:000001">
    <property type="entry name" value="NADH dehydrogenase [ubiquinone] flavoprotein 1, mitochondrial"/>
    <property type="match status" value="1"/>
</dbReference>
<dbReference type="FunFam" id="1.20.1440.230:FF:000002">
    <property type="entry name" value="NADH-quinone oxidoreductase subunit F"/>
    <property type="match status" value="1"/>
</dbReference>
<dbReference type="FunFam" id="3.10.20.600:FF:000002">
    <property type="entry name" value="NADH-quinone oxidoreductase subunit F"/>
    <property type="match status" value="1"/>
</dbReference>
<dbReference type="Gene3D" id="3.10.20.600">
    <property type="match status" value="1"/>
</dbReference>
<dbReference type="Gene3D" id="6.10.250.1450">
    <property type="match status" value="1"/>
</dbReference>
<dbReference type="Gene3D" id="3.40.50.11540">
    <property type="entry name" value="NADH-ubiquinone oxidoreductase 51kDa subunit"/>
    <property type="match status" value="1"/>
</dbReference>
<dbReference type="Gene3D" id="1.20.1440.230">
    <property type="entry name" value="NADH-ubiquinone oxidoreductase 51kDa subunit, iron-sulphur binding domain"/>
    <property type="match status" value="1"/>
</dbReference>
<dbReference type="InterPro" id="IPR001949">
    <property type="entry name" value="NADH-UbQ_OxRdtase_51kDa_CS"/>
</dbReference>
<dbReference type="InterPro" id="IPR011537">
    <property type="entry name" value="NADH-UbQ_OxRdtase_suF"/>
</dbReference>
<dbReference type="InterPro" id="IPR011538">
    <property type="entry name" value="Nuo51_FMN-bd"/>
</dbReference>
<dbReference type="InterPro" id="IPR037225">
    <property type="entry name" value="Nuo51_FMN-bd_sf"/>
</dbReference>
<dbReference type="InterPro" id="IPR019575">
    <property type="entry name" value="Nuop51_4Fe4S-bd"/>
</dbReference>
<dbReference type="InterPro" id="IPR037207">
    <property type="entry name" value="Nuop51_4Fe4S-bd_sf"/>
</dbReference>
<dbReference type="NCBIfam" id="TIGR01959">
    <property type="entry name" value="nuoF_fam"/>
    <property type="match status" value="1"/>
</dbReference>
<dbReference type="NCBIfam" id="NF008436">
    <property type="entry name" value="PRK11278.1"/>
    <property type="match status" value="1"/>
</dbReference>
<dbReference type="NCBIfam" id="NF010120">
    <property type="entry name" value="PRK13596.1"/>
    <property type="match status" value="1"/>
</dbReference>
<dbReference type="PANTHER" id="PTHR43578">
    <property type="entry name" value="NADH-QUINONE OXIDOREDUCTASE SUBUNIT F"/>
    <property type="match status" value="1"/>
</dbReference>
<dbReference type="PANTHER" id="PTHR43578:SF3">
    <property type="entry name" value="NADH-QUINONE OXIDOREDUCTASE SUBUNIT F"/>
    <property type="match status" value="1"/>
</dbReference>
<dbReference type="Pfam" id="PF01512">
    <property type="entry name" value="Complex1_51K"/>
    <property type="match status" value="1"/>
</dbReference>
<dbReference type="Pfam" id="PF10589">
    <property type="entry name" value="NADH_4Fe-4S"/>
    <property type="match status" value="1"/>
</dbReference>
<dbReference type="SMART" id="SM00928">
    <property type="entry name" value="NADH_4Fe-4S"/>
    <property type="match status" value="1"/>
</dbReference>
<dbReference type="SUPFAM" id="SSF142019">
    <property type="entry name" value="Nqo1 FMN-binding domain-like"/>
    <property type="match status" value="1"/>
</dbReference>
<dbReference type="SUPFAM" id="SSF142984">
    <property type="entry name" value="Nqo1 middle domain-like"/>
    <property type="match status" value="1"/>
</dbReference>
<dbReference type="SUPFAM" id="SSF140490">
    <property type="entry name" value="Nqo1C-terminal domain-like"/>
    <property type="match status" value="1"/>
</dbReference>
<dbReference type="PROSITE" id="PS00644">
    <property type="entry name" value="COMPLEX1_51K_1"/>
    <property type="match status" value="1"/>
</dbReference>
<dbReference type="PROSITE" id="PS00645">
    <property type="entry name" value="COMPLEX1_51K_2"/>
    <property type="match status" value="1"/>
</dbReference>
<comment type="function">
    <text evidence="1">NDH-1 shuttles electrons from NADH, via FMN and iron-sulfur (Fe-S) centers, to quinones in the respiratory chain. Couples the redox reaction to proton translocation (for every two electrons transferred, four hydrogen ions are translocated across the cytoplasmic membrane), and thus conserves the redox energy in a proton gradient (By similarity).</text>
</comment>
<comment type="catalytic activity">
    <reaction>
        <text>a quinone + NADH + 5 H(+)(in) = a quinol + NAD(+) + 4 H(+)(out)</text>
        <dbReference type="Rhea" id="RHEA:57888"/>
        <dbReference type="ChEBI" id="CHEBI:15378"/>
        <dbReference type="ChEBI" id="CHEBI:24646"/>
        <dbReference type="ChEBI" id="CHEBI:57540"/>
        <dbReference type="ChEBI" id="CHEBI:57945"/>
        <dbReference type="ChEBI" id="CHEBI:132124"/>
    </reaction>
</comment>
<comment type="cofactor">
    <cofactor evidence="3">
        <name>[4Fe-4S] cluster</name>
        <dbReference type="ChEBI" id="CHEBI:49883"/>
    </cofactor>
    <text evidence="3">Binds 1 [4Fe-4S] cluster.</text>
</comment>
<comment type="cofactor">
    <cofactor evidence="3">
        <name>FMN</name>
        <dbReference type="ChEBI" id="CHEBI:58210"/>
    </cofactor>
</comment>
<comment type="subunit">
    <text evidence="1">Composed of 13 different subunits. Subunits NuoCD, E, F, and G constitute the peripheral sector of the complex (By similarity).</text>
</comment>
<comment type="similarity">
    <text evidence="3">Belongs to the complex I 51 kDa subunit family.</text>
</comment>
<accession>Q8K9Y3</accession>
<reference key="1">
    <citation type="journal article" date="2002" name="Science">
        <title>50 million years of genomic stasis in endosymbiotic bacteria.</title>
        <authorList>
            <person name="Tamas I."/>
            <person name="Klasson L."/>
            <person name="Canbaeck B."/>
            <person name="Naeslund A.K."/>
            <person name="Eriksson A.-S."/>
            <person name="Wernegreen J.J."/>
            <person name="Sandstroem J.P."/>
            <person name="Moran N.A."/>
            <person name="Andersson S.G.E."/>
        </authorList>
    </citation>
    <scope>NUCLEOTIDE SEQUENCE [LARGE SCALE GENOMIC DNA]</scope>
    <source>
        <strain>Sg</strain>
    </source>
</reference>
<feature type="chain" id="PRO_0000118572" description="NADH-quinone oxidoreductase subunit F">
    <location>
        <begin position="1"/>
        <end position="447"/>
    </location>
</feature>
<feature type="binding site" evidence="1">
    <location>
        <begin position="61"/>
        <end position="70"/>
    </location>
    <ligand>
        <name>NAD(+)</name>
        <dbReference type="ChEBI" id="CHEBI:57540"/>
    </ligand>
</feature>
<feature type="binding site" evidence="1">
    <location>
        <begin position="174"/>
        <end position="221"/>
    </location>
    <ligand>
        <name>FMN</name>
        <dbReference type="ChEBI" id="CHEBI:58210"/>
    </ligand>
</feature>
<feature type="binding site" evidence="2">
    <location>
        <position position="352"/>
    </location>
    <ligand>
        <name>[4Fe-4S] cluster</name>
        <dbReference type="ChEBI" id="CHEBI:49883"/>
    </ligand>
</feature>
<feature type="binding site" evidence="2">
    <location>
        <position position="355"/>
    </location>
    <ligand>
        <name>[4Fe-4S] cluster</name>
        <dbReference type="ChEBI" id="CHEBI:49883"/>
    </ligand>
</feature>
<feature type="binding site" evidence="2">
    <location>
        <position position="358"/>
    </location>
    <ligand>
        <name>[4Fe-4S] cluster</name>
        <dbReference type="ChEBI" id="CHEBI:49883"/>
    </ligand>
</feature>
<feature type="binding site" evidence="2">
    <location>
        <position position="399"/>
    </location>
    <ligand>
        <name>[4Fe-4S] cluster</name>
        <dbReference type="ChEBI" id="CHEBI:49883"/>
    </ligand>
</feature>